<gene>
    <name type="primary">bioY</name>
    <name type="ordered locus">RHE_CH00928</name>
</gene>
<sequence>MSTRDLVLTALFAAIIVALGLLPPISLGFIPVPITAQSLGVMMAGVVLGARRGAIAVLIVLLLVAIGLPVLSGGRGGLAIFASPTAGFLVGWIFGAFVTGYLSERLVNHGQSGLVQTVSFFLAAMIGGIVVLYAFGITYLATVAGLGFTKAFVGSMAFIPGDVIKAVVAALLGRAVMVGYPLLPARA</sequence>
<protein>
    <recommendedName>
        <fullName>Biotin transporter BioY</fullName>
    </recommendedName>
    <alternativeName>
        <fullName>Biotin ECF transporter S component BioY</fullName>
    </alternativeName>
</protein>
<proteinExistence type="evidence at protein level"/>
<evidence type="ECO:0000255" key="1"/>
<evidence type="ECO:0000269" key="2">
    <source>
    </source>
</evidence>
<evidence type="ECO:0000305" key="3"/>
<evidence type="ECO:0000305" key="4">
    <source>
    </source>
</evidence>
<organism>
    <name type="scientific">Rhizobium etli (strain ATCC 51251 / DSM 11541 / JCM 21823 / NBRC 15573 / CFN 42)</name>
    <dbReference type="NCBI Taxonomy" id="347834"/>
    <lineage>
        <taxon>Bacteria</taxon>
        <taxon>Pseudomonadati</taxon>
        <taxon>Pseudomonadota</taxon>
        <taxon>Alphaproteobacteria</taxon>
        <taxon>Hyphomicrobiales</taxon>
        <taxon>Rhizobiaceae</taxon>
        <taxon>Rhizobium/Agrobacterium group</taxon>
        <taxon>Rhizobium</taxon>
    </lineage>
</organism>
<name>BIOY_RHIEC</name>
<keyword id="KW-0997">Cell inner membrane</keyword>
<keyword id="KW-1003">Cell membrane</keyword>
<keyword id="KW-0472">Membrane</keyword>
<keyword id="KW-1185">Reference proteome</keyword>
<keyword id="KW-0812">Transmembrane</keyword>
<keyword id="KW-1133">Transmembrane helix</keyword>
<keyword id="KW-0813">Transport</keyword>
<feature type="chain" id="PRO_0000416407" description="Biotin transporter BioY">
    <location>
        <begin position="1"/>
        <end position="187"/>
    </location>
</feature>
<feature type="transmembrane region" description="Helical" evidence="1">
    <location>
        <begin position="10"/>
        <end position="30"/>
    </location>
</feature>
<feature type="transmembrane region" description="Helical" evidence="1">
    <location>
        <begin position="53"/>
        <end position="73"/>
    </location>
</feature>
<feature type="transmembrane region" description="Helical" evidence="1">
    <location>
        <begin position="78"/>
        <end position="98"/>
    </location>
</feature>
<feature type="transmembrane region" description="Helical" evidence="1">
    <location>
        <begin position="120"/>
        <end position="140"/>
    </location>
</feature>
<feature type="transmembrane region" description="Helical" evidence="1">
    <location>
        <begin position="152"/>
        <end position="172"/>
    </location>
</feature>
<feature type="sequence conflict" description="In Ref. 1; AAT52198." evidence="3" ref="1">
    <original>YPLLPARA</original>
    <variation>FPCCGARLSA</variation>
    <location>
        <begin position="180"/>
        <end position="187"/>
    </location>
</feature>
<comment type="function">
    <text evidence="2">Involved in biotin uptake.</text>
</comment>
<comment type="subunit">
    <text evidence="4">Part of a biotin transporter complex composed of BioM, BioN and BioY.</text>
</comment>
<comment type="subcellular location">
    <subcellularLocation>
        <location evidence="3">Cell inner membrane</location>
        <topology evidence="3">Multi-pass membrane protein</topology>
    </subcellularLocation>
</comment>
<comment type="induction">
    <text evidence="2">Expression is repressed by biotin.</text>
</comment>
<comment type="disruption phenotype">
    <text evidence="2">Mutant exhibits lower biotin uptake and has a diminished capacity to form nodules on bean plants.</text>
</comment>
<comment type="similarity">
    <text evidence="3">Belongs to the BioY family.</text>
</comment>
<reference key="1">
    <citation type="journal article" date="2005" name="FEMS Microbiol. Lett.">
        <title>The Rhizobium etli bioMNY operon is involved in biotin transport.</title>
        <authorList>
            <person name="Guillen-Navarro K."/>
            <person name="Araiza G."/>
            <person name="Garcia-de los Santos A."/>
            <person name="Mora Y."/>
            <person name="Dunn M.F."/>
        </authorList>
    </citation>
    <scope>NUCLEOTIDE SEQUENCE [GENOMIC DNA]</scope>
    <scope>FUNCTION IN BIOTIN UPTAKE</scope>
    <scope>SUBUNIT</scope>
    <scope>INDUCTION</scope>
    <scope>DISRUPTION PHENOTYPE</scope>
    <source>
        <strain>CE3</strain>
    </source>
</reference>
<reference key="2">
    <citation type="journal article" date="2006" name="Proc. Natl. Acad. Sci. U.S.A.">
        <title>The partitioned Rhizobium etli genome: genetic and metabolic redundancy in seven interacting replicons.</title>
        <authorList>
            <person name="Gonzalez V."/>
            <person name="Santamaria R.I."/>
            <person name="Bustos P."/>
            <person name="Hernandez-Gonzalez I."/>
            <person name="Medrano-Soto A."/>
            <person name="Moreno-Hagelsieb G."/>
            <person name="Janga S.C."/>
            <person name="Ramirez M.A."/>
            <person name="Jimenez-Jacinto V."/>
            <person name="Collado-Vides J."/>
            <person name="Davila G."/>
        </authorList>
    </citation>
    <scope>NUCLEOTIDE SEQUENCE [LARGE SCALE GENOMIC DNA]</scope>
    <source>
        <strain>ATCC 51251 / DSM 11541 / JCM 21823 / NBRC 15573 / CFN 42</strain>
    </source>
</reference>
<accession>Q2KBP7</accession>
<accession>Q6GUB0</accession>
<dbReference type="EMBL" id="AY644481">
    <property type="protein sequence ID" value="AAT52198.1"/>
    <property type="molecule type" value="Genomic_DNA"/>
</dbReference>
<dbReference type="EMBL" id="CP000133">
    <property type="protein sequence ID" value="ABC89739.1"/>
    <property type="molecule type" value="Genomic_DNA"/>
</dbReference>
<dbReference type="RefSeq" id="WP_011424275.1">
    <property type="nucleotide sequence ID" value="NC_007761.1"/>
</dbReference>
<dbReference type="SMR" id="Q2KBP7"/>
<dbReference type="TCDB" id="2.A.88.1.1">
    <property type="family name" value="the vitamin uptake transporter (vut) family"/>
</dbReference>
<dbReference type="TCDB" id="3.A.1.25.1">
    <property type="family name" value="the atp-binding cassette (abc) superfamily"/>
</dbReference>
<dbReference type="KEGG" id="ret:RHE_CH00928"/>
<dbReference type="eggNOG" id="COG1268">
    <property type="taxonomic scope" value="Bacteria"/>
</dbReference>
<dbReference type="HOGENOM" id="CLU_077931_0_1_5"/>
<dbReference type="OrthoDB" id="9803495at2"/>
<dbReference type="Proteomes" id="UP000001936">
    <property type="component" value="Chromosome"/>
</dbReference>
<dbReference type="GO" id="GO:0005886">
    <property type="term" value="C:plasma membrane"/>
    <property type="evidence" value="ECO:0007669"/>
    <property type="project" value="UniProtKB-SubCell"/>
</dbReference>
<dbReference type="GO" id="GO:0015225">
    <property type="term" value="F:biotin transmembrane transporter activity"/>
    <property type="evidence" value="ECO:0007669"/>
    <property type="project" value="InterPro"/>
</dbReference>
<dbReference type="Gene3D" id="1.10.1760.20">
    <property type="match status" value="1"/>
</dbReference>
<dbReference type="InterPro" id="IPR003784">
    <property type="entry name" value="BioY"/>
</dbReference>
<dbReference type="PANTHER" id="PTHR34295">
    <property type="entry name" value="BIOTIN TRANSPORTER BIOY"/>
    <property type="match status" value="1"/>
</dbReference>
<dbReference type="PANTHER" id="PTHR34295:SF4">
    <property type="entry name" value="BIOTIN TRANSPORTER BIOY-RELATED"/>
    <property type="match status" value="1"/>
</dbReference>
<dbReference type="Pfam" id="PF02632">
    <property type="entry name" value="BioY"/>
    <property type="match status" value="1"/>
</dbReference>
<dbReference type="PIRSF" id="PIRSF016661">
    <property type="entry name" value="BioY"/>
    <property type="match status" value="1"/>
</dbReference>